<protein>
    <recommendedName>
        <fullName>Probable sulfate permease C3H7.02</fullName>
    </recommendedName>
</protein>
<feature type="chain" id="PRO_0000080186" description="Probable sulfate permease C3H7.02">
    <location>
        <begin position="1"/>
        <end position="877"/>
    </location>
</feature>
<feature type="transmembrane region" description="Helical" evidence="2">
    <location>
        <begin position="133"/>
        <end position="153"/>
    </location>
</feature>
<feature type="transmembrane region" description="Helical" evidence="2">
    <location>
        <begin position="161"/>
        <end position="181"/>
    </location>
</feature>
<feature type="transmembrane region" description="Helical" evidence="2">
    <location>
        <begin position="186"/>
        <end position="206"/>
    </location>
</feature>
<feature type="transmembrane region" description="Helical" evidence="2">
    <location>
        <begin position="221"/>
        <end position="241"/>
    </location>
</feature>
<feature type="transmembrane region" description="Helical" evidence="2">
    <location>
        <begin position="243"/>
        <end position="263"/>
    </location>
</feature>
<feature type="transmembrane region" description="Helical" evidence="2">
    <location>
        <begin position="292"/>
        <end position="312"/>
    </location>
</feature>
<feature type="transmembrane region" description="Helical" evidence="2">
    <location>
        <begin position="329"/>
        <end position="349"/>
    </location>
</feature>
<feature type="transmembrane region" description="Helical" evidence="2">
    <location>
        <begin position="384"/>
        <end position="404"/>
    </location>
</feature>
<feature type="transmembrane region" description="Helical" evidence="2">
    <location>
        <begin position="424"/>
        <end position="444"/>
    </location>
</feature>
<feature type="transmembrane region" description="Helical" evidence="2">
    <location>
        <begin position="461"/>
        <end position="481"/>
    </location>
</feature>
<feature type="transmembrane region" description="Helical" evidence="2">
    <location>
        <begin position="484"/>
        <end position="504"/>
    </location>
</feature>
<feature type="transmembrane region" description="Helical" evidence="2">
    <location>
        <begin position="518"/>
        <end position="538"/>
    </location>
</feature>
<feature type="transmembrane region" description="Helical" evidence="2">
    <location>
        <begin position="543"/>
        <end position="563"/>
    </location>
</feature>
<feature type="domain" description="STAS" evidence="3">
    <location>
        <begin position="594"/>
        <end position="747"/>
    </location>
</feature>
<feature type="region of interest" description="Disordered" evidence="4">
    <location>
        <begin position="643"/>
        <end position="663"/>
    </location>
</feature>
<feature type="region of interest" description="Disordered" evidence="4">
    <location>
        <begin position="793"/>
        <end position="821"/>
    </location>
</feature>
<feature type="compositionally biased region" description="Basic and acidic residues" evidence="4">
    <location>
        <begin position="801"/>
        <end position="821"/>
    </location>
</feature>
<evidence type="ECO:0000250" key="1"/>
<evidence type="ECO:0000255" key="2"/>
<evidence type="ECO:0000255" key="3">
    <source>
        <dbReference type="PROSITE-ProRule" id="PRU00198"/>
    </source>
</evidence>
<evidence type="ECO:0000256" key="4">
    <source>
        <dbReference type="SAM" id="MobiDB-lite"/>
    </source>
</evidence>
<evidence type="ECO:0000305" key="5"/>
<reference key="1">
    <citation type="journal article" date="2002" name="Nature">
        <title>The genome sequence of Schizosaccharomyces pombe.</title>
        <authorList>
            <person name="Wood V."/>
            <person name="Gwilliam R."/>
            <person name="Rajandream M.A."/>
            <person name="Lyne M.H."/>
            <person name="Lyne R."/>
            <person name="Stewart A."/>
            <person name="Sgouros J.G."/>
            <person name="Peat N."/>
            <person name="Hayles J."/>
            <person name="Baker S.G."/>
            <person name="Basham D."/>
            <person name="Bowman S."/>
            <person name="Brooks K."/>
            <person name="Brown D."/>
            <person name="Brown S."/>
            <person name="Chillingworth T."/>
            <person name="Churcher C.M."/>
            <person name="Collins M."/>
            <person name="Connor R."/>
            <person name="Cronin A."/>
            <person name="Davis P."/>
            <person name="Feltwell T."/>
            <person name="Fraser A."/>
            <person name="Gentles S."/>
            <person name="Goble A."/>
            <person name="Hamlin N."/>
            <person name="Harris D.E."/>
            <person name="Hidalgo J."/>
            <person name="Hodgson G."/>
            <person name="Holroyd S."/>
            <person name="Hornsby T."/>
            <person name="Howarth S."/>
            <person name="Huckle E.J."/>
            <person name="Hunt S."/>
            <person name="Jagels K."/>
            <person name="James K.D."/>
            <person name="Jones L."/>
            <person name="Jones M."/>
            <person name="Leather S."/>
            <person name="McDonald S."/>
            <person name="McLean J."/>
            <person name="Mooney P."/>
            <person name="Moule S."/>
            <person name="Mungall K.L."/>
            <person name="Murphy L.D."/>
            <person name="Niblett D."/>
            <person name="Odell C."/>
            <person name="Oliver K."/>
            <person name="O'Neil S."/>
            <person name="Pearson D."/>
            <person name="Quail M.A."/>
            <person name="Rabbinowitsch E."/>
            <person name="Rutherford K.M."/>
            <person name="Rutter S."/>
            <person name="Saunders D."/>
            <person name="Seeger K."/>
            <person name="Sharp S."/>
            <person name="Skelton J."/>
            <person name="Simmonds M.N."/>
            <person name="Squares R."/>
            <person name="Squares S."/>
            <person name="Stevens K."/>
            <person name="Taylor K."/>
            <person name="Taylor R.G."/>
            <person name="Tivey A."/>
            <person name="Walsh S.V."/>
            <person name="Warren T."/>
            <person name="Whitehead S."/>
            <person name="Woodward J.R."/>
            <person name="Volckaert G."/>
            <person name="Aert R."/>
            <person name="Robben J."/>
            <person name="Grymonprez B."/>
            <person name="Weltjens I."/>
            <person name="Vanstreels E."/>
            <person name="Rieger M."/>
            <person name="Schaefer M."/>
            <person name="Mueller-Auer S."/>
            <person name="Gabel C."/>
            <person name="Fuchs M."/>
            <person name="Duesterhoeft A."/>
            <person name="Fritzc C."/>
            <person name="Holzer E."/>
            <person name="Moestl D."/>
            <person name="Hilbert H."/>
            <person name="Borzym K."/>
            <person name="Langer I."/>
            <person name="Beck A."/>
            <person name="Lehrach H."/>
            <person name="Reinhardt R."/>
            <person name="Pohl T.M."/>
            <person name="Eger P."/>
            <person name="Zimmermann W."/>
            <person name="Wedler H."/>
            <person name="Wambutt R."/>
            <person name="Purnelle B."/>
            <person name="Goffeau A."/>
            <person name="Cadieu E."/>
            <person name="Dreano S."/>
            <person name="Gloux S."/>
            <person name="Lelaure V."/>
            <person name="Mottier S."/>
            <person name="Galibert F."/>
            <person name="Aves S.J."/>
            <person name="Xiang Z."/>
            <person name="Hunt C."/>
            <person name="Moore K."/>
            <person name="Hurst S.M."/>
            <person name="Lucas M."/>
            <person name="Rochet M."/>
            <person name="Gaillardin C."/>
            <person name="Tallada V.A."/>
            <person name="Garzon A."/>
            <person name="Thode G."/>
            <person name="Daga R.R."/>
            <person name="Cruzado L."/>
            <person name="Jimenez J."/>
            <person name="Sanchez M."/>
            <person name="del Rey F."/>
            <person name="Benito J."/>
            <person name="Dominguez A."/>
            <person name="Revuelta J.L."/>
            <person name="Moreno S."/>
            <person name="Armstrong J."/>
            <person name="Forsburg S.L."/>
            <person name="Cerutti L."/>
            <person name="Lowe T."/>
            <person name="McCombie W.R."/>
            <person name="Paulsen I."/>
            <person name="Potashkin J."/>
            <person name="Shpakovski G.V."/>
            <person name="Ussery D."/>
            <person name="Barrell B.G."/>
            <person name="Nurse P."/>
        </authorList>
    </citation>
    <scope>NUCLEOTIDE SEQUENCE [LARGE SCALE GENOMIC DNA]</scope>
    <source>
        <strain>972 / ATCC 24843</strain>
    </source>
</reference>
<reference key="2">
    <citation type="journal article" date="2000" name="Genes Cells">
        <title>Large-scale screening of intracellular protein localization in living fission yeast cells by the use of a GFP-fusion genomic DNA library.</title>
        <authorList>
            <person name="Ding D.-Q."/>
            <person name="Tomita Y."/>
            <person name="Yamamoto A."/>
            <person name="Chikashige Y."/>
            <person name="Haraguchi T."/>
            <person name="Hiraoka Y."/>
        </authorList>
    </citation>
    <scope>NUCLEOTIDE SEQUENCE [LARGE SCALE GENOMIC DNA] OF 428-646</scope>
    <source>
        <strain>ATCC 38364 / 968</strain>
    </source>
</reference>
<keyword id="KW-0472">Membrane</keyword>
<keyword id="KW-1185">Reference proteome</keyword>
<keyword id="KW-0812">Transmembrane</keyword>
<keyword id="KW-1133">Transmembrane helix</keyword>
<keyword id="KW-0813">Transport</keyword>
<accession>O74377</accession>
<accession>Q9UU11</accession>
<sequence length="877" mass="96374">MSFIKKIKHYFADPADLPQDEAPDSVPGLVPPPSNFVPVYPEPTYSDTVSKKGTIVRVVRHTASKLTKHGDSSQSLSTLPNNDISVGEYVEPLPSVPGWLKQNIFSHFGTRLLHYLRSLFPIMNWLPRYNWNWLVYDFIAGITVGCVVVPQGMSYAKVATLPAQYGLYSSFVGVAIYCIFATSKDVSIGPVAVMSLVTSKVIANVQAKDPNYDAAQIGTTLALLAGAITCGLGLLRLGFIIEFIPVPAVAGFTTGSALNIMAGQVSSLMGYKSRVHTNAATYRVIIQTLQNLPHTKVDAAFGLVSLFILYLVRYTCQHLIKRYTKFQRVFFLTNVLRSAVIIIVGTAISYGVCKHRRENPPISILGTVPSGFRDMGVPVISRKLCADLASELPVSVIVLLLEHISIAKSFGRVNDYKVIPDQELIAMGATNLIGVFFHAYPATGSFSRSAINAKSGVRTPLGGIFTAGVVVLALYCLTGAFYYIPNAVLSAVIIHSVFDLIIPWRQTLLFWRMQPLEALIFICAVFVSVFSSIENGIYTAVCLSAALLLFRIAKPSGSFLGILKIANKFDDDENSIDVVRDIYVPLNQKGMNPNLTVRDPPAGVLIFRLQESFTYPNAGHVNSMLTSKAKTVTRRGNANIYKKASDRPWNDPAPRKKKNAPEVEDTRPLLRAIILDFSAVNHIDTTGVQALVDTRKELEIYAGDEVEFHFTDINNDWIKRTLVAAGFGKARDATKYTSRSIEVGSAAPLRDIETPMAPGNSRIVMPSSVRVRPFDEEEAIESSIPAIVSEDGADSDTISVSDDKDKKVEGHRPSQDPTFSHHEYYPVISTTYPFFHVDVTSAVVDIQYRHVLDVNYKPKIVTNEVENENIEHSDGAA</sequence>
<organism>
    <name type="scientific">Schizosaccharomyces pombe (strain 972 / ATCC 24843)</name>
    <name type="common">Fission yeast</name>
    <dbReference type="NCBI Taxonomy" id="284812"/>
    <lineage>
        <taxon>Eukaryota</taxon>
        <taxon>Fungi</taxon>
        <taxon>Dikarya</taxon>
        <taxon>Ascomycota</taxon>
        <taxon>Taphrinomycotina</taxon>
        <taxon>Schizosaccharomycetes</taxon>
        <taxon>Schizosaccharomycetales</taxon>
        <taxon>Schizosaccharomycetaceae</taxon>
        <taxon>Schizosaccharomyces</taxon>
    </lineage>
</organism>
<dbReference type="EMBL" id="CU329671">
    <property type="protein sequence ID" value="CAA20298.1"/>
    <property type="molecule type" value="Genomic_DNA"/>
</dbReference>
<dbReference type="EMBL" id="AB027878">
    <property type="protein sequence ID" value="BAA87182.1"/>
    <property type="molecule type" value="Genomic_DNA"/>
</dbReference>
<dbReference type="PIR" id="T40413">
    <property type="entry name" value="T40413"/>
</dbReference>
<dbReference type="SMR" id="O74377"/>
<dbReference type="BioGRID" id="277206">
    <property type="interactions" value="4"/>
</dbReference>
<dbReference type="FunCoup" id="O74377">
    <property type="interactions" value="41"/>
</dbReference>
<dbReference type="STRING" id="284812.O74377"/>
<dbReference type="iPTMnet" id="O74377"/>
<dbReference type="PaxDb" id="4896-SPBC3H7.02.1"/>
<dbReference type="EnsemblFungi" id="SPBC3H7.02.1">
    <property type="protein sequence ID" value="SPBC3H7.02.1:pep"/>
    <property type="gene ID" value="SPBC3H7.02"/>
</dbReference>
<dbReference type="KEGG" id="spo:2540681"/>
<dbReference type="PomBase" id="SPBC3H7.02"/>
<dbReference type="VEuPathDB" id="FungiDB:SPBC3H7.02"/>
<dbReference type="eggNOG" id="KOG0236">
    <property type="taxonomic scope" value="Eukaryota"/>
</dbReference>
<dbReference type="HOGENOM" id="CLU_003182_8_0_1"/>
<dbReference type="InParanoid" id="O74377"/>
<dbReference type="OMA" id="KFMMALQ"/>
<dbReference type="PhylomeDB" id="O74377"/>
<dbReference type="Reactome" id="R-SPO-174362">
    <property type="pathway name" value="Transport and synthesis of PAPS"/>
</dbReference>
<dbReference type="Reactome" id="R-SPO-427601">
    <property type="pathway name" value="Multifunctional anion exchangers"/>
</dbReference>
<dbReference type="PRO" id="PR:O74377"/>
<dbReference type="Proteomes" id="UP000002485">
    <property type="component" value="Chromosome II"/>
</dbReference>
<dbReference type="GO" id="GO:0005886">
    <property type="term" value="C:plasma membrane"/>
    <property type="evidence" value="ECO:0000318"/>
    <property type="project" value="GO_Central"/>
</dbReference>
<dbReference type="GO" id="GO:0008271">
    <property type="term" value="F:secondary active sulfate transmembrane transporter activity"/>
    <property type="evidence" value="ECO:0007669"/>
    <property type="project" value="InterPro"/>
</dbReference>
<dbReference type="GO" id="GO:0015116">
    <property type="term" value="F:sulfate transmembrane transporter activity"/>
    <property type="evidence" value="ECO:0000269"/>
    <property type="project" value="PomBase"/>
</dbReference>
<dbReference type="GO" id="GO:1902476">
    <property type="term" value="P:chloride transmembrane transport"/>
    <property type="evidence" value="ECO:0000318"/>
    <property type="project" value="GO_Central"/>
</dbReference>
<dbReference type="GO" id="GO:1902434">
    <property type="term" value="P:sulfate import across plasma membrane"/>
    <property type="evidence" value="ECO:0000269"/>
    <property type="project" value="PomBase"/>
</dbReference>
<dbReference type="GO" id="GO:1902358">
    <property type="term" value="P:sulfate transmembrane transport"/>
    <property type="evidence" value="ECO:0000318"/>
    <property type="project" value="GO_Central"/>
</dbReference>
<dbReference type="CDD" id="cd07042">
    <property type="entry name" value="STAS_SulP_like_sulfate_transporter"/>
    <property type="match status" value="1"/>
</dbReference>
<dbReference type="FunFam" id="3.30.750.24:FF:000046">
    <property type="entry name" value="Solute carrier family 26 (Sodium-independent sulfate anion transporter), member 11"/>
    <property type="match status" value="1"/>
</dbReference>
<dbReference type="Gene3D" id="3.30.750.24">
    <property type="entry name" value="STAS domain"/>
    <property type="match status" value="1"/>
</dbReference>
<dbReference type="InterPro" id="IPR018045">
    <property type="entry name" value="S04_transporter_CS"/>
</dbReference>
<dbReference type="InterPro" id="IPR011547">
    <property type="entry name" value="SLC26A/SulP_dom"/>
</dbReference>
<dbReference type="InterPro" id="IPR001902">
    <property type="entry name" value="SLC26A/SulP_fam"/>
</dbReference>
<dbReference type="InterPro" id="IPR002645">
    <property type="entry name" value="STAS_dom"/>
</dbReference>
<dbReference type="InterPro" id="IPR036513">
    <property type="entry name" value="STAS_dom_sf"/>
</dbReference>
<dbReference type="NCBIfam" id="TIGR00815">
    <property type="entry name" value="sulP"/>
    <property type="match status" value="1"/>
</dbReference>
<dbReference type="PANTHER" id="PTHR11814">
    <property type="entry name" value="SULFATE TRANSPORTER"/>
    <property type="match status" value="1"/>
</dbReference>
<dbReference type="Pfam" id="PF01740">
    <property type="entry name" value="STAS"/>
    <property type="match status" value="1"/>
</dbReference>
<dbReference type="Pfam" id="PF00916">
    <property type="entry name" value="Sulfate_transp"/>
    <property type="match status" value="1"/>
</dbReference>
<dbReference type="SUPFAM" id="SSF52091">
    <property type="entry name" value="SpoIIaa-like"/>
    <property type="match status" value="1"/>
</dbReference>
<dbReference type="PROSITE" id="PS01130">
    <property type="entry name" value="SLC26A"/>
    <property type="match status" value="1"/>
</dbReference>
<dbReference type="PROSITE" id="PS50801">
    <property type="entry name" value="STAS"/>
    <property type="match status" value="1"/>
</dbReference>
<comment type="function">
    <text evidence="1">High affinity uptake of sulfate into the cell.</text>
</comment>
<comment type="subcellular location">
    <subcellularLocation>
        <location evidence="5">Membrane</location>
        <topology evidence="5">Multi-pass membrane protein</topology>
    </subcellularLocation>
</comment>
<comment type="similarity">
    <text evidence="5">Belongs to the SLC26A/SulP transporter (TC 2.A.53) family.</text>
</comment>
<proteinExistence type="inferred from homology"/>
<name>SULH1_SCHPO</name>
<gene>
    <name type="ORF">SPBC3H7.02</name>
</gene>